<accession>P31104</accession>
<proteinExistence type="evidence at protein level"/>
<name>AROC_BACSU</name>
<gene>
    <name evidence="1" type="primary">aroC</name>
    <name type="synonym">aroF</name>
    <name type="ordered locus">BSU22710</name>
</gene>
<protein>
    <recommendedName>
        <fullName evidence="1">Chorismate synthase</fullName>
        <shortName evidence="1">CS</shortName>
        <ecNumber evidence="1">4.2.3.5</ecNumber>
    </recommendedName>
    <alternativeName>
        <fullName evidence="1">5-enolpyruvylshikimate-3-phosphate phospholyase</fullName>
    </alternativeName>
</protein>
<evidence type="ECO:0000255" key="1">
    <source>
        <dbReference type="HAMAP-Rule" id="MF_00300"/>
    </source>
</evidence>
<evidence type="ECO:0000305" key="2"/>
<feature type="chain" id="PRO_0000140553" description="Chorismate synthase">
    <location>
        <begin position="1"/>
        <end position="390"/>
    </location>
</feature>
<feature type="binding site" evidence="1">
    <location>
        <position position="39"/>
    </location>
    <ligand>
        <name>NADP(+)</name>
        <dbReference type="ChEBI" id="CHEBI:58349"/>
    </ligand>
</feature>
<feature type="binding site" evidence="1">
    <location>
        <position position="45"/>
    </location>
    <ligand>
        <name>NADP(+)</name>
        <dbReference type="ChEBI" id="CHEBI:58349"/>
    </ligand>
</feature>
<feature type="binding site" evidence="1">
    <location>
        <begin position="132"/>
        <end position="134"/>
    </location>
    <ligand>
        <name>FMN</name>
        <dbReference type="ChEBI" id="CHEBI:58210"/>
    </ligand>
</feature>
<feature type="binding site" evidence="1">
    <location>
        <begin position="253"/>
        <end position="254"/>
    </location>
    <ligand>
        <name>FMN</name>
        <dbReference type="ChEBI" id="CHEBI:58210"/>
    </ligand>
</feature>
<feature type="binding site" evidence="1">
    <location>
        <position position="298"/>
    </location>
    <ligand>
        <name>FMN</name>
        <dbReference type="ChEBI" id="CHEBI:58210"/>
    </ligand>
</feature>
<feature type="binding site" evidence="1">
    <location>
        <begin position="313"/>
        <end position="317"/>
    </location>
    <ligand>
        <name>FMN</name>
        <dbReference type="ChEBI" id="CHEBI:58210"/>
    </ligand>
</feature>
<feature type="binding site" evidence="1">
    <location>
        <position position="339"/>
    </location>
    <ligand>
        <name>FMN</name>
        <dbReference type="ChEBI" id="CHEBI:58210"/>
    </ligand>
</feature>
<feature type="sequence conflict" description="In Ref. 1; AAA20859." evidence="2" ref="1">
    <original>E</original>
    <variation>G</variation>
    <location>
        <position position="175"/>
    </location>
</feature>
<feature type="sequence conflict" description="In Ref. 1; AAA20859." evidence="2" ref="1">
    <original>NA</original>
    <variation>T</variation>
    <location>
        <begin position="362"/>
        <end position="363"/>
    </location>
</feature>
<dbReference type="EC" id="4.2.3.5" evidence="1"/>
<dbReference type="EMBL" id="M80245">
    <property type="protein sequence ID" value="AAA20859.1"/>
    <property type="status" value="ALT_FRAME"/>
    <property type="molecule type" value="Genomic_DNA"/>
</dbReference>
<dbReference type="EMBL" id="AL009126">
    <property type="protein sequence ID" value="CAB14187.3"/>
    <property type="molecule type" value="Genomic_DNA"/>
</dbReference>
<dbReference type="PIR" id="C69590">
    <property type="entry name" value="C69590"/>
</dbReference>
<dbReference type="RefSeq" id="NP_390152.3">
    <property type="nucleotide sequence ID" value="NC_000964.3"/>
</dbReference>
<dbReference type="RefSeq" id="WP_004398727.1">
    <property type="nucleotide sequence ID" value="NZ_OZ025638.1"/>
</dbReference>
<dbReference type="SMR" id="P31104"/>
<dbReference type="FunCoup" id="P31104">
    <property type="interactions" value="624"/>
</dbReference>
<dbReference type="IntAct" id="P31104">
    <property type="interactions" value="1"/>
</dbReference>
<dbReference type="MINT" id="P31104"/>
<dbReference type="STRING" id="224308.BSU22710"/>
<dbReference type="jPOST" id="P31104"/>
<dbReference type="PaxDb" id="224308-BSU22710"/>
<dbReference type="EnsemblBacteria" id="CAB14187">
    <property type="protein sequence ID" value="CAB14187"/>
    <property type="gene ID" value="BSU_22710"/>
</dbReference>
<dbReference type="GeneID" id="939000"/>
<dbReference type="KEGG" id="bsu:BSU22710"/>
<dbReference type="eggNOG" id="COG0082">
    <property type="taxonomic scope" value="Bacteria"/>
</dbReference>
<dbReference type="InParanoid" id="P31104"/>
<dbReference type="OrthoDB" id="9771806at2"/>
<dbReference type="PhylomeDB" id="P31104"/>
<dbReference type="BioCyc" id="BSUB:BSU22710-MONOMER"/>
<dbReference type="BRENDA" id="4.2.3.5">
    <property type="organism ID" value="658"/>
</dbReference>
<dbReference type="UniPathway" id="UPA00053">
    <property type="reaction ID" value="UER00090"/>
</dbReference>
<dbReference type="Proteomes" id="UP000001570">
    <property type="component" value="Chromosome"/>
</dbReference>
<dbReference type="GO" id="GO:0005829">
    <property type="term" value="C:cytosol"/>
    <property type="evidence" value="ECO:0000318"/>
    <property type="project" value="GO_Central"/>
</dbReference>
<dbReference type="GO" id="GO:0004107">
    <property type="term" value="F:chorismate synthase activity"/>
    <property type="evidence" value="ECO:0000318"/>
    <property type="project" value="GO_Central"/>
</dbReference>
<dbReference type="GO" id="GO:0010181">
    <property type="term" value="F:FMN binding"/>
    <property type="evidence" value="ECO:0000318"/>
    <property type="project" value="GO_Central"/>
</dbReference>
<dbReference type="GO" id="GO:0008652">
    <property type="term" value="P:amino acid biosynthetic process"/>
    <property type="evidence" value="ECO:0007669"/>
    <property type="project" value="UniProtKB-KW"/>
</dbReference>
<dbReference type="GO" id="GO:0009073">
    <property type="term" value="P:aromatic amino acid family biosynthetic process"/>
    <property type="evidence" value="ECO:0000318"/>
    <property type="project" value="GO_Central"/>
</dbReference>
<dbReference type="GO" id="GO:0009423">
    <property type="term" value="P:chorismate biosynthetic process"/>
    <property type="evidence" value="ECO:0000318"/>
    <property type="project" value="GO_Central"/>
</dbReference>
<dbReference type="CDD" id="cd07304">
    <property type="entry name" value="Chorismate_synthase"/>
    <property type="match status" value="1"/>
</dbReference>
<dbReference type="FunFam" id="3.60.150.10:FF:000002">
    <property type="entry name" value="Chorismate synthase"/>
    <property type="match status" value="1"/>
</dbReference>
<dbReference type="Gene3D" id="3.60.150.10">
    <property type="entry name" value="Chorismate synthase AroC"/>
    <property type="match status" value="1"/>
</dbReference>
<dbReference type="HAMAP" id="MF_00300">
    <property type="entry name" value="Chorismate_synth"/>
    <property type="match status" value="1"/>
</dbReference>
<dbReference type="InterPro" id="IPR000453">
    <property type="entry name" value="Chorismate_synth"/>
</dbReference>
<dbReference type="InterPro" id="IPR035904">
    <property type="entry name" value="Chorismate_synth_AroC_sf"/>
</dbReference>
<dbReference type="InterPro" id="IPR020541">
    <property type="entry name" value="Chorismate_synthase_CS"/>
</dbReference>
<dbReference type="NCBIfam" id="TIGR00033">
    <property type="entry name" value="aroC"/>
    <property type="match status" value="1"/>
</dbReference>
<dbReference type="NCBIfam" id="NF003793">
    <property type="entry name" value="PRK05382.1"/>
    <property type="match status" value="1"/>
</dbReference>
<dbReference type="PANTHER" id="PTHR21085">
    <property type="entry name" value="CHORISMATE SYNTHASE"/>
    <property type="match status" value="1"/>
</dbReference>
<dbReference type="PANTHER" id="PTHR21085:SF0">
    <property type="entry name" value="CHORISMATE SYNTHASE"/>
    <property type="match status" value="1"/>
</dbReference>
<dbReference type="Pfam" id="PF01264">
    <property type="entry name" value="Chorismate_synt"/>
    <property type="match status" value="1"/>
</dbReference>
<dbReference type="PIRSF" id="PIRSF001456">
    <property type="entry name" value="Chorismate_synth"/>
    <property type="match status" value="1"/>
</dbReference>
<dbReference type="SUPFAM" id="SSF103263">
    <property type="entry name" value="Chorismate synthase, AroC"/>
    <property type="match status" value="1"/>
</dbReference>
<dbReference type="PROSITE" id="PS00787">
    <property type="entry name" value="CHORISMATE_SYNTHASE_1"/>
    <property type="match status" value="1"/>
</dbReference>
<dbReference type="PROSITE" id="PS00788">
    <property type="entry name" value="CHORISMATE_SYNTHASE_2"/>
    <property type="match status" value="1"/>
</dbReference>
<dbReference type="PROSITE" id="PS00789">
    <property type="entry name" value="CHORISMATE_SYNTHASE_3"/>
    <property type="match status" value="1"/>
</dbReference>
<comment type="function">
    <text evidence="1">Catalyzes the anti-1,4-elimination of the C-3 phosphate and the C-6 proR hydrogen from 5-enolpyruvylshikimate-3-phosphate (EPSP) to yield chorismate, which is the branch point compound that serves as the starting substrate for the three terminal pathways of aromatic amino acid biosynthesis. This reaction introduces a second double bond into the aromatic ring system.</text>
</comment>
<comment type="catalytic activity">
    <reaction evidence="1">
        <text>5-O-(1-carboxyvinyl)-3-phosphoshikimate = chorismate + phosphate</text>
        <dbReference type="Rhea" id="RHEA:21020"/>
        <dbReference type="ChEBI" id="CHEBI:29748"/>
        <dbReference type="ChEBI" id="CHEBI:43474"/>
        <dbReference type="ChEBI" id="CHEBI:57701"/>
        <dbReference type="EC" id="4.2.3.5"/>
    </reaction>
</comment>
<comment type="cofactor">
    <cofactor evidence="1">
        <name>FMNH2</name>
        <dbReference type="ChEBI" id="CHEBI:57618"/>
    </cofactor>
    <text evidence="1">Reduced FMN (FMNH(2)).</text>
</comment>
<comment type="pathway">
    <text evidence="1">Metabolic intermediate biosynthesis; chorismate biosynthesis; chorismate from D-erythrose 4-phosphate and phosphoenolpyruvate: step 7/7.</text>
</comment>
<comment type="subunit">
    <text evidence="1">Homotetramer.</text>
</comment>
<comment type="similarity">
    <text evidence="1">Belongs to the chorismate synthase family.</text>
</comment>
<comment type="sequence caution" evidence="2">
    <conflict type="frameshift">
        <sequence resource="EMBL-CDS" id="AAA20859"/>
    </conflict>
</comment>
<reference key="1">
    <citation type="submission" date="1992-01" db="EMBL/GenBank/DDBJ databases">
        <title>Sequence of Bacillus subtilis dbpA, mtr(A,B), gerC(1-3), ndk, cheR, aro(B,E,F,H), trp(A-F), hisH, and tyrA genes.</title>
        <authorList>
            <person name="Henner D.J."/>
        </authorList>
    </citation>
    <scope>NUCLEOTIDE SEQUENCE [GENOMIC DNA]</scope>
</reference>
<reference key="2">
    <citation type="journal article" date="1997" name="Nature">
        <title>The complete genome sequence of the Gram-positive bacterium Bacillus subtilis.</title>
        <authorList>
            <person name="Kunst F."/>
            <person name="Ogasawara N."/>
            <person name="Moszer I."/>
            <person name="Albertini A.M."/>
            <person name="Alloni G."/>
            <person name="Azevedo V."/>
            <person name="Bertero M.G."/>
            <person name="Bessieres P."/>
            <person name="Bolotin A."/>
            <person name="Borchert S."/>
            <person name="Borriss R."/>
            <person name="Boursier L."/>
            <person name="Brans A."/>
            <person name="Braun M."/>
            <person name="Brignell S.C."/>
            <person name="Bron S."/>
            <person name="Brouillet S."/>
            <person name="Bruschi C.V."/>
            <person name="Caldwell B."/>
            <person name="Capuano V."/>
            <person name="Carter N.M."/>
            <person name="Choi S.-K."/>
            <person name="Codani J.-J."/>
            <person name="Connerton I.F."/>
            <person name="Cummings N.J."/>
            <person name="Daniel R.A."/>
            <person name="Denizot F."/>
            <person name="Devine K.M."/>
            <person name="Duesterhoeft A."/>
            <person name="Ehrlich S.D."/>
            <person name="Emmerson P.T."/>
            <person name="Entian K.-D."/>
            <person name="Errington J."/>
            <person name="Fabret C."/>
            <person name="Ferrari E."/>
            <person name="Foulger D."/>
            <person name="Fritz C."/>
            <person name="Fujita M."/>
            <person name="Fujita Y."/>
            <person name="Fuma S."/>
            <person name="Galizzi A."/>
            <person name="Galleron N."/>
            <person name="Ghim S.-Y."/>
            <person name="Glaser P."/>
            <person name="Goffeau A."/>
            <person name="Golightly E.J."/>
            <person name="Grandi G."/>
            <person name="Guiseppi G."/>
            <person name="Guy B.J."/>
            <person name="Haga K."/>
            <person name="Haiech J."/>
            <person name="Harwood C.R."/>
            <person name="Henaut A."/>
            <person name="Hilbert H."/>
            <person name="Holsappel S."/>
            <person name="Hosono S."/>
            <person name="Hullo M.-F."/>
            <person name="Itaya M."/>
            <person name="Jones L.-M."/>
            <person name="Joris B."/>
            <person name="Karamata D."/>
            <person name="Kasahara Y."/>
            <person name="Klaerr-Blanchard M."/>
            <person name="Klein C."/>
            <person name="Kobayashi Y."/>
            <person name="Koetter P."/>
            <person name="Koningstein G."/>
            <person name="Krogh S."/>
            <person name="Kumano M."/>
            <person name="Kurita K."/>
            <person name="Lapidus A."/>
            <person name="Lardinois S."/>
            <person name="Lauber J."/>
            <person name="Lazarevic V."/>
            <person name="Lee S.-M."/>
            <person name="Levine A."/>
            <person name="Liu H."/>
            <person name="Masuda S."/>
            <person name="Mauel C."/>
            <person name="Medigue C."/>
            <person name="Medina N."/>
            <person name="Mellado R.P."/>
            <person name="Mizuno M."/>
            <person name="Moestl D."/>
            <person name="Nakai S."/>
            <person name="Noback M."/>
            <person name="Noone D."/>
            <person name="O'Reilly M."/>
            <person name="Ogawa K."/>
            <person name="Ogiwara A."/>
            <person name="Oudega B."/>
            <person name="Park S.-H."/>
            <person name="Parro V."/>
            <person name="Pohl T.M."/>
            <person name="Portetelle D."/>
            <person name="Porwollik S."/>
            <person name="Prescott A.M."/>
            <person name="Presecan E."/>
            <person name="Pujic P."/>
            <person name="Purnelle B."/>
            <person name="Rapoport G."/>
            <person name="Rey M."/>
            <person name="Reynolds S."/>
            <person name="Rieger M."/>
            <person name="Rivolta C."/>
            <person name="Rocha E."/>
            <person name="Roche B."/>
            <person name="Rose M."/>
            <person name="Sadaie Y."/>
            <person name="Sato T."/>
            <person name="Scanlan E."/>
            <person name="Schleich S."/>
            <person name="Schroeter R."/>
            <person name="Scoffone F."/>
            <person name="Sekiguchi J."/>
            <person name="Sekowska A."/>
            <person name="Seror S.J."/>
            <person name="Serror P."/>
            <person name="Shin B.-S."/>
            <person name="Soldo B."/>
            <person name="Sorokin A."/>
            <person name="Tacconi E."/>
            <person name="Takagi T."/>
            <person name="Takahashi H."/>
            <person name="Takemaru K."/>
            <person name="Takeuchi M."/>
            <person name="Tamakoshi A."/>
            <person name="Tanaka T."/>
            <person name="Terpstra P."/>
            <person name="Tognoni A."/>
            <person name="Tosato V."/>
            <person name="Uchiyama S."/>
            <person name="Vandenbol M."/>
            <person name="Vannier F."/>
            <person name="Vassarotti A."/>
            <person name="Viari A."/>
            <person name="Wambutt R."/>
            <person name="Wedler E."/>
            <person name="Wedler H."/>
            <person name="Weitzenegger T."/>
            <person name="Winters P."/>
            <person name="Wipat A."/>
            <person name="Yamamoto H."/>
            <person name="Yamane K."/>
            <person name="Yasumoto K."/>
            <person name="Yata K."/>
            <person name="Yoshida K."/>
            <person name="Yoshikawa H.-F."/>
            <person name="Zumstein E."/>
            <person name="Yoshikawa H."/>
            <person name="Danchin A."/>
        </authorList>
    </citation>
    <scope>NUCLEOTIDE SEQUENCE [LARGE SCALE GENOMIC DNA]</scope>
    <source>
        <strain>168</strain>
    </source>
</reference>
<reference key="3">
    <citation type="journal article" date="1999" name="Genome Res.">
        <title>Detecting and analyzing DNA sequencing errors: toward a higher quality of the Bacillus subtilis genome sequence.</title>
        <authorList>
            <person name="Medigue C."/>
            <person name="Rose M."/>
            <person name="Viari A."/>
            <person name="Danchin A."/>
        </authorList>
    </citation>
    <scope>SEQUENCE REVISION</scope>
</reference>
<reference key="4">
    <citation type="journal article" date="2009" name="Microbiology">
        <title>From a consortium sequence to a unified sequence: the Bacillus subtilis 168 reference genome a decade later.</title>
        <authorList>
            <person name="Barbe V."/>
            <person name="Cruveiller S."/>
            <person name="Kunst F."/>
            <person name="Lenoble P."/>
            <person name="Meurice G."/>
            <person name="Sekowska A."/>
            <person name="Vallenet D."/>
            <person name="Wang T."/>
            <person name="Moszer I."/>
            <person name="Medigue C."/>
            <person name="Danchin A."/>
        </authorList>
    </citation>
    <scope>SEQUENCE REVISION TO 362-363</scope>
</reference>
<reference key="5">
    <citation type="journal article" date="1997" name="Electrophoresis">
        <title>First steps from a two-dimensional protein index towards a response-regulation map for Bacillus subtilis.</title>
        <authorList>
            <person name="Antelmann H."/>
            <person name="Bernhardt J."/>
            <person name="Schmid R."/>
            <person name="Mach H."/>
            <person name="Voelker U."/>
            <person name="Hecker M."/>
        </authorList>
    </citation>
    <scope>PROTEIN SEQUENCE OF 1-10</scope>
    <source>
        <strain>168 / IS58</strain>
    </source>
</reference>
<keyword id="KW-0028">Amino-acid biosynthesis</keyword>
<keyword id="KW-0057">Aromatic amino acid biosynthesis</keyword>
<keyword id="KW-0903">Direct protein sequencing</keyword>
<keyword id="KW-0274">FAD</keyword>
<keyword id="KW-0285">Flavoprotein</keyword>
<keyword id="KW-0288">FMN</keyword>
<keyword id="KW-0456">Lyase</keyword>
<keyword id="KW-0521">NADP</keyword>
<keyword id="KW-1185">Reference proteome</keyword>
<sequence length="390" mass="42806">MRYLTAGESHGPQLTTIIEGVPAGLYITEEDINFELARRQKGHGRGRRMQIEKDQAKIMSGVRHARTLGSPIALVVENNDWKHWTKIMGAAPITEDEEKEMKRQISRPRPGHADLNGAIKYNHRDMRNVLERSSARETTVRVAAGAVAKKILSELGIKVAGHVLQIGAVKAEKTEYTSIEDLQRVTEESPVRCYDEEAGKKMMAAIDEAKANGDSIGGIVEVIVEGMPVGVGSYVHYDRKLDSKLAAAVLSINAFKGVEFGIGFEAAGRNGSEVHDEIIWDEEKGYTRATNRLGGLEGGMTTGMPIVVRGVMKPIPTLYKPLKSVDIETKEPFSASIERSDSCAVPAASVVAEAAVAWEIANAVVEQFGLDQIDRIRENVENMRKLSREF</sequence>
<organism>
    <name type="scientific">Bacillus subtilis (strain 168)</name>
    <dbReference type="NCBI Taxonomy" id="224308"/>
    <lineage>
        <taxon>Bacteria</taxon>
        <taxon>Bacillati</taxon>
        <taxon>Bacillota</taxon>
        <taxon>Bacilli</taxon>
        <taxon>Bacillales</taxon>
        <taxon>Bacillaceae</taxon>
        <taxon>Bacillus</taxon>
    </lineage>
</organism>